<sequence length="697" mass="76724">MRLTVGALLACAALGLCLAVPDKTVKWCAVSEHENTKCISFRDHMKTVLPPDGPRLACVKKTSYPDCIKAISASEADAMTLDGGWVYDAGLTPNNLKPVAAEFYGSVEHPQTYYYAVAVVKKGTDFQLNQLEGKKSCHTGLGRSAGWVIPIGLLFCKLSEPRSPLEKAVSSFFSGSCVPCADPVAFPKLCQLCPGCGCSSTQPFFGYVGAFKCLKDGGGDVAFVKHTTIFEVLPEKADRDQYELLCLDNTRKPVDQYEDCYLARIPSHAVVARKNNGKEDLIWEILKVAQEHFGKGKSKDFQLFSSPLGKDLLFKDSAFGLLRVPPRMDYRLYLGHNYVTAIRNQQEGVCPEGSIDNSPVKWCALSHLERTKCDEWSIISEGKIECESAETTEDCIEKIVNGEADAMTLDGGHAYIAGQCGLVPVMAEYYESSNCAIPSQQGIFPKGYYAVAVVKASDTSITWNNLKGKKSCHTGVDRTAGWNIPMGMLYNRINHCKFDEFFSQGCAPGYEKNSTLCDLCIGPLKCAPNNKEEYNGYTGAFRCLVEKGDVAFVKHQTVLDNTEGKNPAEWAKNLKQEDFELLCPDGTRKPVKDFASCHLAQAPNHVVVSRKEKAARVKAVLTSQETLFGGSDCTGNFCLFKSTTKDLLFRDDTKCFVKLPEGTTPEKYLGAEYMQSVGNMRKCSTSRLLEACTFHKH</sequence>
<dbReference type="EMBL" id="AF440692">
    <property type="protein sequence ID" value="AAL34533.1"/>
    <property type="molecule type" value="mRNA"/>
</dbReference>
<dbReference type="EMBL" id="AK085754">
    <property type="protein sequence ID" value="BAC39532.1"/>
    <property type="molecule type" value="mRNA"/>
</dbReference>
<dbReference type="EMBL" id="AK142599">
    <property type="protein sequence ID" value="BAE25124.1"/>
    <property type="molecule type" value="mRNA"/>
</dbReference>
<dbReference type="EMBL" id="AK146549">
    <property type="protein sequence ID" value="BAE27253.1"/>
    <property type="molecule type" value="mRNA"/>
</dbReference>
<dbReference type="EMBL" id="AK149559">
    <property type="protein sequence ID" value="BAE28960.1"/>
    <property type="molecule type" value="mRNA"/>
</dbReference>
<dbReference type="EMBL" id="AK149595">
    <property type="protein sequence ID" value="BAE28981.1"/>
    <property type="molecule type" value="mRNA"/>
</dbReference>
<dbReference type="EMBL" id="AK150782">
    <property type="protein sequence ID" value="BAE29847.1"/>
    <property type="molecule type" value="mRNA"/>
</dbReference>
<dbReference type="EMBL" id="AK168419">
    <property type="protein sequence ID" value="BAE40332.1"/>
    <property type="molecule type" value="mRNA"/>
</dbReference>
<dbReference type="EMBL" id="AK168938">
    <property type="protein sequence ID" value="BAE40747.1"/>
    <property type="molecule type" value="mRNA"/>
</dbReference>
<dbReference type="EMBL" id="BC008559">
    <property type="protein sequence ID" value="AAH08559.1"/>
    <property type="molecule type" value="mRNA"/>
</dbReference>
<dbReference type="EMBL" id="BC012313">
    <property type="protein sequence ID" value="AAH12313.1"/>
    <property type="molecule type" value="mRNA"/>
</dbReference>
<dbReference type="EMBL" id="BC022986">
    <property type="protein sequence ID" value="AAH22986.1"/>
    <property type="molecule type" value="mRNA"/>
</dbReference>
<dbReference type="EMBL" id="BC092046">
    <property type="protein sequence ID" value="AAH92046.1"/>
    <property type="molecule type" value="mRNA"/>
</dbReference>
<dbReference type="EMBL" id="AF027336">
    <property type="protein sequence ID" value="AAB84034.1"/>
    <property type="molecule type" value="Genomic_DNA"/>
</dbReference>
<dbReference type="EMBL" id="M23013">
    <property type="protein sequence ID" value="AAA40488.1"/>
    <property type="molecule type" value="mRNA"/>
</dbReference>
<dbReference type="EMBL" id="M23014">
    <property type="protein sequence ID" value="AAA40489.1"/>
    <property type="molecule type" value="mRNA"/>
</dbReference>
<dbReference type="EMBL" id="M23015">
    <property type="protein sequence ID" value="AAA40490.1"/>
    <property type="molecule type" value="mRNA"/>
</dbReference>
<dbReference type="EMBL" id="M23016">
    <property type="protein sequence ID" value="AAA40491.1"/>
    <property type="molecule type" value="mRNA"/>
</dbReference>
<dbReference type="EMBL" id="S67217">
    <property type="protein sequence ID" value="AAB28966.2"/>
    <property type="molecule type" value="mRNA"/>
</dbReference>
<dbReference type="EMBL" id="J03299">
    <property type="protein sequence ID" value="AAA39438.1"/>
    <property type="molecule type" value="mRNA"/>
</dbReference>
<dbReference type="CCDS" id="CCDS23451.1"/>
<dbReference type="PIR" id="A28446">
    <property type="entry name" value="A28446"/>
</dbReference>
<dbReference type="RefSeq" id="NP_598738.1">
    <property type="nucleotide sequence ID" value="NM_133977.2"/>
</dbReference>
<dbReference type="SMR" id="Q921I1"/>
<dbReference type="BioGRID" id="204313">
    <property type="interactions" value="9"/>
</dbReference>
<dbReference type="FunCoup" id="Q921I1">
    <property type="interactions" value="591"/>
</dbReference>
<dbReference type="IntAct" id="Q921I1">
    <property type="interactions" value="4"/>
</dbReference>
<dbReference type="MINT" id="Q921I1"/>
<dbReference type="STRING" id="10090.ENSMUSP00000035158"/>
<dbReference type="MEROPS" id="S60.977"/>
<dbReference type="MEROPS" id="S60.978"/>
<dbReference type="CarbonylDB" id="Q921I1"/>
<dbReference type="GlyConnect" id="556">
    <property type="glycosylation" value="20 N-Linked glycans (1 site)"/>
</dbReference>
<dbReference type="GlyCosmos" id="Q921I1">
    <property type="glycosylation" value="1 site, 26 glycans"/>
</dbReference>
<dbReference type="GlyGen" id="Q921I1">
    <property type="glycosylation" value="4 sites, 27 N-linked glycans (2 sites), 1 O-linked glycan (2 sites)"/>
</dbReference>
<dbReference type="iPTMnet" id="Q921I1"/>
<dbReference type="PhosphoSitePlus" id="Q921I1"/>
<dbReference type="SwissPalm" id="Q921I1"/>
<dbReference type="REPRODUCTION-2DPAGE" id="IPI00139788"/>
<dbReference type="REPRODUCTION-2DPAGE" id="Q921I1"/>
<dbReference type="CPTAC" id="non-CPTAC-3439"/>
<dbReference type="CPTAC" id="non-CPTAC-5621"/>
<dbReference type="jPOST" id="Q921I1"/>
<dbReference type="PaxDb" id="10090-ENSMUSP00000035158"/>
<dbReference type="PeptideAtlas" id="Q921I1"/>
<dbReference type="ProteomicsDB" id="259087"/>
<dbReference type="Antibodypedia" id="873">
    <property type="antibodies" value="1847 antibodies from 44 providers"/>
</dbReference>
<dbReference type="DNASU" id="22041"/>
<dbReference type="Ensembl" id="ENSMUST00000035158.16">
    <property type="protein sequence ID" value="ENSMUSP00000035158.10"/>
    <property type="gene ID" value="ENSMUSG00000032554.16"/>
</dbReference>
<dbReference type="Ensembl" id="ENSMUST00000112645.8">
    <property type="protein sequence ID" value="ENSMUSP00000108264.2"/>
    <property type="gene ID" value="ENSMUSG00000032554.16"/>
</dbReference>
<dbReference type="GeneID" id="22041"/>
<dbReference type="KEGG" id="mmu:22041"/>
<dbReference type="UCSC" id="uc009rgj.1">
    <property type="organism name" value="mouse"/>
</dbReference>
<dbReference type="AGR" id="MGI:98821"/>
<dbReference type="CTD" id="22041"/>
<dbReference type="MGI" id="MGI:98821">
    <property type="gene designation" value="Trf"/>
</dbReference>
<dbReference type="VEuPathDB" id="HostDB:ENSMUSG00000032554"/>
<dbReference type="eggNOG" id="ENOG502QT0C">
    <property type="taxonomic scope" value="Eukaryota"/>
</dbReference>
<dbReference type="GeneTree" id="ENSGT00940000154388"/>
<dbReference type="HOGENOM" id="CLU_011309_1_0_1"/>
<dbReference type="InParanoid" id="Q921I1"/>
<dbReference type="OMA" id="DEWSINS"/>
<dbReference type="OrthoDB" id="41266at2759"/>
<dbReference type="PhylomeDB" id="Q921I1"/>
<dbReference type="TreeFam" id="TF324013"/>
<dbReference type="Reactome" id="R-MMU-114608">
    <property type="pathway name" value="Platelet degranulation"/>
</dbReference>
<dbReference type="Reactome" id="R-MMU-381426">
    <property type="pathway name" value="Regulation of Insulin-like Growth Factor (IGF) transport and uptake by Insulin-like Growth Factor Binding Proteins (IGFBPs)"/>
</dbReference>
<dbReference type="Reactome" id="R-MMU-8856825">
    <property type="pathway name" value="Cargo recognition for clathrin-mediated endocytosis"/>
</dbReference>
<dbReference type="Reactome" id="R-MMU-8856828">
    <property type="pathway name" value="Clathrin-mediated endocytosis"/>
</dbReference>
<dbReference type="Reactome" id="R-MMU-8957275">
    <property type="pathway name" value="Post-translational protein phosphorylation"/>
</dbReference>
<dbReference type="Reactome" id="R-MMU-917937">
    <property type="pathway name" value="Iron uptake and transport"/>
</dbReference>
<dbReference type="Reactome" id="R-MMU-917977">
    <property type="pathway name" value="Transferrin endocytosis and recycling"/>
</dbReference>
<dbReference type="BioGRID-ORCS" id="22041">
    <property type="hits" value="2 hits in 58 CRISPR screens"/>
</dbReference>
<dbReference type="ChiTaRS" id="Trf">
    <property type="organism name" value="mouse"/>
</dbReference>
<dbReference type="PRO" id="PR:Q921I1"/>
<dbReference type="Proteomes" id="UP000000589">
    <property type="component" value="Chromosome 9"/>
</dbReference>
<dbReference type="RNAct" id="Q921I1">
    <property type="molecule type" value="protein"/>
</dbReference>
<dbReference type="Bgee" id="ENSMUSG00000032554">
    <property type="expression patterns" value="Expressed in left lobe of liver and 228 other cell types or tissues"/>
</dbReference>
<dbReference type="ExpressionAtlas" id="Q921I1">
    <property type="expression patterns" value="baseline and differential"/>
</dbReference>
<dbReference type="GO" id="GO:0016324">
    <property type="term" value="C:apical plasma membrane"/>
    <property type="evidence" value="ECO:0007669"/>
    <property type="project" value="Ensembl"/>
</dbReference>
<dbReference type="GO" id="GO:0009925">
    <property type="term" value="C:basal plasma membrane"/>
    <property type="evidence" value="ECO:0007669"/>
    <property type="project" value="Ensembl"/>
</dbReference>
<dbReference type="GO" id="GO:0009986">
    <property type="term" value="C:cell surface"/>
    <property type="evidence" value="ECO:0007669"/>
    <property type="project" value="Ensembl"/>
</dbReference>
<dbReference type="GO" id="GO:0005905">
    <property type="term" value="C:clathrin-coated pit"/>
    <property type="evidence" value="ECO:0000314"/>
    <property type="project" value="MGI"/>
</dbReference>
<dbReference type="GO" id="GO:0097433">
    <property type="term" value="C:dense body"/>
    <property type="evidence" value="ECO:0000266"/>
    <property type="project" value="MGI"/>
</dbReference>
<dbReference type="GO" id="GO:0005769">
    <property type="term" value="C:early endosome"/>
    <property type="evidence" value="ECO:0000314"/>
    <property type="project" value="MGI"/>
</dbReference>
<dbReference type="GO" id="GO:0030139">
    <property type="term" value="C:endocytic vesicle"/>
    <property type="evidence" value="ECO:0000314"/>
    <property type="project" value="MGI"/>
</dbReference>
<dbReference type="GO" id="GO:0005768">
    <property type="term" value="C:endosome"/>
    <property type="evidence" value="ECO:0000314"/>
    <property type="project" value="MGI"/>
</dbReference>
<dbReference type="GO" id="GO:0005615">
    <property type="term" value="C:extracellular space"/>
    <property type="evidence" value="ECO:0007669"/>
    <property type="project" value="Ensembl"/>
</dbReference>
<dbReference type="GO" id="GO:1990712">
    <property type="term" value="C:HFE-transferrin receptor complex"/>
    <property type="evidence" value="ECO:0007669"/>
    <property type="project" value="Ensembl"/>
</dbReference>
<dbReference type="GO" id="GO:0005770">
    <property type="term" value="C:late endosome"/>
    <property type="evidence" value="ECO:0007669"/>
    <property type="project" value="Ensembl"/>
</dbReference>
<dbReference type="GO" id="GO:0016020">
    <property type="term" value="C:membrane"/>
    <property type="evidence" value="ECO:0000315"/>
    <property type="project" value="ParkinsonsUK-UCL"/>
</dbReference>
<dbReference type="GO" id="GO:0048471">
    <property type="term" value="C:perinuclear region of cytoplasm"/>
    <property type="evidence" value="ECO:0007669"/>
    <property type="project" value="Ensembl"/>
</dbReference>
<dbReference type="GO" id="GO:0055037">
    <property type="term" value="C:recycling endosome"/>
    <property type="evidence" value="ECO:0000314"/>
    <property type="project" value="MGI"/>
</dbReference>
<dbReference type="GO" id="GO:0030120">
    <property type="term" value="C:vesicle coat"/>
    <property type="evidence" value="ECO:0000266"/>
    <property type="project" value="MGI"/>
</dbReference>
<dbReference type="GO" id="GO:0019899">
    <property type="term" value="F:enzyme binding"/>
    <property type="evidence" value="ECO:0007669"/>
    <property type="project" value="Ensembl"/>
</dbReference>
<dbReference type="GO" id="GO:0008199">
    <property type="term" value="F:ferric iron binding"/>
    <property type="evidence" value="ECO:0007669"/>
    <property type="project" value="InterPro"/>
</dbReference>
<dbReference type="GO" id="GO:0008198">
    <property type="term" value="F:ferrous iron binding"/>
    <property type="evidence" value="ECO:0007669"/>
    <property type="project" value="Ensembl"/>
</dbReference>
<dbReference type="GO" id="GO:0034986">
    <property type="term" value="F:iron chaperone activity"/>
    <property type="evidence" value="ECO:0007669"/>
    <property type="project" value="Ensembl"/>
</dbReference>
<dbReference type="GO" id="GO:1990459">
    <property type="term" value="F:transferrin receptor binding"/>
    <property type="evidence" value="ECO:0007669"/>
    <property type="project" value="Ensembl"/>
</dbReference>
<dbReference type="GO" id="GO:0044325">
    <property type="term" value="F:transmembrane transporter binding"/>
    <property type="evidence" value="ECO:0007669"/>
    <property type="project" value="Ensembl"/>
</dbReference>
<dbReference type="GO" id="GO:0071281">
    <property type="term" value="P:cellular response to iron ion"/>
    <property type="evidence" value="ECO:0007669"/>
    <property type="project" value="Ensembl"/>
</dbReference>
<dbReference type="GO" id="GO:0006879">
    <property type="term" value="P:intracellular iron ion homeostasis"/>
    <property type="evidence" value="ECO:0007669"/>
    <property type="project" value="Ensembl"/>
</dbReference>
<dbReference type="GO" id="GO:0006826">
    <property type="term" value="P:iron ion transport"/>
    <property type="evidence" value="ECO:0000315"/>
    <property type="project" value="MGI"/>
</dbReference>
<dbReference type="GO" id="GO:0060586">
    <property type="term" value="P:multicellular organismal-level iron ion homeostasis"/>
    <property type="evidence" value="ECO:0007669"/>
    <property type="project" value="Ensembl"/>
</dbReference>
<dbReference type="GO" id="GO:0030316">
    <property type="term" value="P:osteoclast differentiation"/>
    <property type="evidence" value="ECO:0000314"/>
    <property type="project" value="DFLAT"/>
</dbReference>
<dbReference type="GO" id="GO:0032436">
    <property type="term" value="P:positive regulation of proteasomal ubiquitin-dependent protein catabolic process"/>
    <property type="evidence" value="ECO:0007669"/>
    <property type="project" value="Ensembl"/>
</dbReference>
<dbReference type="GO" id="GO:0048260">
    <property type="term" value="P:positive regulation of receptor-mediated endocytosis"/>
    <property type="evidence" value="ECO:0007669"/>
    <property type="project" value="Ensembl"/>
</dbReference>
<dbReference type="GO" id="GO:0034756">
    <property type="term" value="P:regulation of iron ion transport"/>
    <property type="evidence" value="ECO:0007669"/>
    <property type="project" value="Ensembl"/>
</dbReference>
<dbReference type="GO" id="GO:0009617">
    <property type="term" value="P:response to bacterium"/>
    <property type="evidence" value="ECO:0000270"/>
    <property type="project" value="MGI"/>
</dbReference>
<dbReference type="CDD" id="cd13617">
    <property type="entry name" value="PBP2_transferrin_C"/>
    <property type="match status" value="1"/>
</dbReference>
<dbReference type="CDD" id="cd13618">
    <property type="entry name" value="PBP2_transferrin_N"/>
    <property type="match status" value="1"/>
</dbReference>
<dbReference type="FunFam" id="3.40.190.10:FF:000095">
    <property type="entry name" value="Lactotransferrin"/>
    <property type="match status" value="1"/>
</dbReference>
<dbReference type="FunFam" id="3.40.190.10:FF:000105">
    <property type="entry name" value="Serotransferrin"/>
    <property type="match status" value="1"/>
</dbReference>
<dbReference type="Gene3D" id="3.40.190.10">
    <property type="entry name" value="Periplasmic binding protein-like II"/>
    <property type="match status" value="4"/>
</dbReference>
<dbReference type="InterPro" id="IPR030685">
    <property type="entry name" value="Serotransferrin_mammal"/>
</dbReference>
<dbReference type="InterPro" id="IPR016357">
    <property type="entry name" value="Transferrin"/>
</dbReference>
<dbReference type="InterPro" id="IPR001156">
    <property type="entry name" value="Transferrin-like_dom"/>
</dbReference>
<dbReference type="InterPro" id="IPR018195">
    <property type="entry name" value="Transferrin_Fe_BS"/>
</dbReference>
<dbReference type="PANTHER" id="PTHR11485:SF31">
    <property type="entry name" value="SEROTRANSFERRIN"/>
    <property type="match status" value="1"/>
</dbReference>
<dbReference type="PANTHER" id="PTHR11485">
    <property type="entry name" value="TRANSFERRIN"/>
    <property type="match status" value="1"/>
</dbReference>
<dbReference type="Pfam" id="PF00405">
    <property type="entry name" value="Transferrin"/>
    <property type="match status" value="2"/>
</dbReference>
<dbReference type="PIRSF" id="PIRSF500682">
    <property type="entry name" value="Serotransferrin"/>
    <property type="match status" value="1"/>
</dbReference>
<dbReference type="PIRSF" id="PIRSF002549">
    <property type="entry name" value="Transferrin"/>
    <property type="match status" value="1"/>
</dbReference>
<dbReference type="PRINTS" id="PR00422">
    <property type="entry name" value="TRANSFERRIN"/>
</dbReference>
<dbReference type="SMART" id="SM00094">
    <property type="entry name" value="TR_FER"/>
    <property type="match status" value="2"/>
</dbReference>
<dbReference type="SUPFAM" id="SSF53850">
    <property type="entry name" value="Periplasmic binding protein-like II"/>
    <property type="match status" value="2"/>
</dbReference>
<dbReference type="PROSITE" id="PS00205">
    <property type="entry name" value="TRANSFERRIN_LIKE_1"/>
    <property type="match status" value="1"/>
</dbReference>
<dbReference type="PROSITE" id="PS00206">
    <property type="entry name" value="TRANSFERRIN_LIKE_2"/>
    <property type="match status" value="2"/>
</dbReference>
<dbReference type="PROSITE" id="PS00207">
    <property type="entry name" value="TRANSFERRIN_LIKE_3"/>
    <property type="match status" value="2"/>
</dbReference>
<dbReference type="PROSITE" id="PS51408">
    <property type="entry name" value="TRANSFERRIN_LIKE_4"/>
    <property type="match status" value="2"/>
</dbReference>
<organism>
    <name type="scientific">Mus musculus</name>
    <name type="common">Mouse</name>
    <dbReference type="NCBI Taxonomy" id="10090"/>
    <lineage>
        <taxon>Eukaryota</taxon>
        <taxon>Metazoa</taxon>
        <taxon>Chordata</taxon>
        <taxon>Craniata</taxon>
        <taxon>Vertebrata</taxon>
        <taxon>Euteleostomi</taxon>
        <taxon>Mammalia</taxon>
        <taxon>Eutheria</taxon>
        <taxon>Euarchontoglires</taxon>
        <taxon>Glires</taxon>
        <taxon>Rodentia</taxon>
        <taxon>Myomorpha</taxon>
        <taxon>Muroidea</taxon>
        <taxon>Muridae</taxon>
        <taxon>Murinae</taxon>
        <taxon>Mus</taxon>
        <taxon>Mus</taxon>
    </lineage>
</organism>
<gene>
    <name type="primary">Tf</name>
    <name type="synonym">Trf</name>
</gene>
<accession>Q921I1</accession>
<accession>O35421</accession>
<accession>Q3UBW7</accession>
<accession>Q58E69</accession>
<accession>Q61803</accession>
<accession>Q62357</accession>
<accession>Q62358</accession>
<accession>Q62359</accession>
<accession>Q63915</accession>
<accession>Q64515</accession>
<accession>Q8VII5</accession>
<accession>Q922C0</accession>
<keyword id="KW-0903">Direct protein sequencing</keyword>
<keyword id="KW-1015">Disulfide bond</keyword>
<keyword id="KW-0325">Glycoprotein</keyword>
<keyword id="KW-0406">Ion transport</keyword>
<keyword id="KW-0408">Iron</keyword>
<keyword id="KW-0410">Iron transport</keyword>
<keyword id="KW-0479">Metal-binding</keyword>
<keyword id="KW-0488">Methylation</keyword>
<keyword id="KW-0597">Phosphoprotein</keyword>
<keyword id="KW-1185">Reference proteome</keyword>
<keyword id="KW-0677">Repeat</keyword>
<keyword id="KW-0964">Secreted</keyword>
<keyword id="KW-0732">Signal</keyword>
<keyword id="KW-0813">Transport</keyword>
<feature type="signal peptide" evidence="1">
    <location>
        <begin position="1"/>
        <end position="19"/>
    </location>
</feature>
<feature type="chain" id="PRO_0000035716" description="Serotransferrin">
    <location>
        <begin position="20"/>
        <end position="697"/>
    </location>
</feature>
<feature type="domain" description="Transferrin-like 1" evidence="4">
    <location>
        <begin position="25"/>
        <end position="347"/>
    </location>
</feature>
<feature type="domain" description="Transferrin-like 2" evidence="4">
    <location>
        <begin position="360"/>
        <end position="682"/>
    </location>
</feature>
<feature type="binding site" evidence="4">
    <location>
        <position position="82"/>
    </location>
    <ligand>
        <name>Fe(3+)</name>
        <dbReference type="ChEBI" id="CHEBI:29034"/>
        <label>1</label>
    </ligand>
</feature>
<feature type="binding site" evidence="4">
    <location>
        <position position="114"/>
    </location>
    <ligand>
        <name>Fe(3+)</name>
        <dbReference type="ChEBI" id="CHEBI:29034"/>
        <label>1</label>
    </ligand>
</feature>
<feature type="binding site" evidence="4">
    <location>
        <position position="139"/>
    </location>
    <ligand>
        <name>hydrogencarbonate</name>
        <dbReference type="ChEBI" id="CHEBI:17544"/>
        <label>1</label>
    </ligand>
</feature>
<feature type="binding site" evidence="4">
    <location>
        <position position="143"/>
    </location>
    <ligand>
        <name>hydrogencarbonate</name>
        <dbReference type="ChEBI" id="CHEBI:17544"/>
        <label>1</label>
    </ligand>
</feature>
<feature type="binding site" evidence="4">
    <location>
        <position position="145"/>
    </location>
    <ligand>
        <name>hydrogencarbonate</name>
        <dbReference type="ChEBI" id="CHEBI:17544"/>
        <label>1</label>
    </ligand>
</feature>
<feature type="binding site" evidence="4">
    <location>
        <position position="146"/>
    </location>
    <ligand>
        <name>hydrogencarbonate</name>
        <dbReference type="ChEBI" id="CHEBI:17544"/>
        <label>1</label>
    </ligand>
</feature>
<feature type="binding site" evidence="4">
    <location>
        <position position="207"/>
    </location>
    <ligand>
        <name>Fe(3+)</name>
        <dbReference type="ChEBI" id="CHEBI:29034"/>
        <label>1</label>
    </ligand>
</feature>
<feature type="binding site" evidence="4">
    <location>
        <position position="268"/>
    </location>
    <ligand>
        <name>Fe(3+)</name>
        <dbReference type="ChEBI" id="CHEBI:29034"/>
        <label>1</label>
    </ligand>
</feature>
<feature type="binding site" evidence="4">
    <location>
        <position position="410"/>
    </location>
    <ligand>
        <name>Fe(3+)</name>
        <dbReference type="ChEBI" id="CHEBI:29034"/>
        <label>2</label>
    </ligand>
</feature>
<feature type="binding site" evidence="4">
    <location>
        <position position="448"/>
    </location>
    <ligand>
        <name>Fe(3+)</name>
        <dbReference type="ChEBI" id="CHEBI:29034"/>
        <label>2</label>
    </ligand>
</feature>
<feature type="binding site" evidence="4">
    <location>
        <position position="474"/>
    </location>
    <ligand>
        <name>hydrogencarbonate</name>
        <dbReference type="ChEBI" id="CHEBI:17544"/>
        <label>2</label>
    </ligand>
</feature>
<feature type="binding site" evidence="4">
    <location>
        <position position="478"/>
    </location>
    <ligand>
        <name>hydrogencarbonate</name>
        <dbReference type="ChEBI" id="CHEBI:17544"/>
        <label>2</label>
    </ligand>
</feature>
<feature type="binding site" evidence="4">
    <location>
        <position position="480"/>
    </location>
    <ligand>
        <name>hydrogencarbonate</name>
        <dbReference type="ChEBI" id="CHEBI:17544"/>
        <label>2</label>
    </ligand>
</feature>
<feature type="binding site" evidence="4">
    <location>
        <position position="481"/>
    </location>
    <ligand>
        <name>hydrogencarbonate</name>
        <dbReference type="ChEBI" id="CHEBI:17544"/>
        <label>2</label>
    </ligand>
</feature>
<feature type="binding site" evidence="4">
    <location>
        <position position="537"/>
    </location>
    <ligand>
        <name>Fe(3+)</name>
        <dbReference type="ChEBI" id="CHEBI:29034"/>
        <label>2</label>
    </ligand>
</feature>
<feature type="binding site" evidence="4">
    <location>
        <position position="605"/>
    </location>
    <ligand>
        <name>Fe(3+)</name>
        <dbReference type="ChEBI" id="CHEBI:29034"/>
        <label>2</label>
    </ligand>
</feature>
<feature type="modified residue" description="Dimethylated arginine" evidence="3">
    <location>
        <position position="42"/>
    </location>
</feature>
<feature type="modified residue" description="Phosphoserine" evidence="2">
    <location>
        <position position="388"/>
    </location>
</feature>
<feature type="modified residue" description="Phosphoserine" evidence="2">
    <location>
        <position position="684"/>
    </location>
</feature>
<feature type="glycosylation site" description="N-linked (GlcNAc...) asparagine" evidence="5">
    <location>
        <position position="513"/>
    </location>
</feature>
<feature type="disulfide bond" evidence="4">
    <location>
        <begin position="28"/>
        <end position="67"/>
    </location>
</feature>
<feature type="disulfide bond" evidence="4">
    <location>
        <begin position="38"/>
        <end position="58"/>
    </location>
</feature>
<feature type="disulfide bond" evidence="4">
    <location>
        <begin position="137"/>
        <end position="213"/>
    </location>
</feature>
<feature type="disulfide bond" evidence="4">
    <location>
        <begin position="156"/>
        <end position="350"/>
    </location>
</feature>
<feature type="disulfide bond" evidence="4">
    <location>
        <begin position="177"/>
        <end position="193"/>
    </location>
</feature>
<feature type="disulfide bond" evidence="4">
    <location>
        <begin position="180"/>
        <end position="196"/>
    </location>
</feature>
<feature type="disulfide bond" evidence="4">
    <location>
        <begin position="190"/>
        <end position="198"/>
    </location>
</feature>
<feature type="disulfide bond" evidence="4">
    <location>
        <begin position="246"/>
        <end position="260"/>
    </location>
</feature>
<feature type="disulfide bond" evidence="4">
    <location>
        <begin position="363"/>
        <end position="395"/>
    </location>
</feature>
<feature type="disulfide bond" evidence="4">
    <location>
        <begin position="373"/>
        <end position="386"/>
    </location>
</feature>
<feature type="disulfide bond" evidence="4">
    <location>
        <begin position="420"/>
        <end position="692"/>
    </location>
</feature>
<feature type="disulfide bond" evidence="4">
    <location>
        <begin position="435"/>
        <end position="655"/>
    </location>
</feature>
<feature type="disulfide bond" evidence="4">
    <location>
        <begin position="472"/>
        <end position="543"/>
    </location>
</feature>
<feature type="disulfide bond" evidence="4">
    <location>
        <begin position="496"/>
        <end position="683"/>
    </location>
</feature>
<feature type="disulfide bond" evidence="4">
    <location>
        <begin position="506"/>
        <end position="520"/>
    </location>
</feature>
<feature type="disulfide bond" evidence="4">
    <location>
        <begin position="517"/>
        <end position="526"/>
    </location>
</feature>
<feature type="disulfide bond" evidence="4">
    <location>
        <begin position="583"/>
        <end position="597"/>
    </location>
</feature>
<feature type="disulfide bond" evidence="4">
    <location>
        <begin position="633"/>
        <end position="638"/>
    </location>
</feature>
<feature type="sequence conflict" description="In Ref. 1; AAL34533." evidence="7" ref="1">
    <original>LT</original>
    <variation>FA</variation>
    <location>
        <begin position="3"/>
        <end position="4"/>
    </location>
</feature>
<feature type="sequence conflict" description="In Ref. 5; AAA40488." evidence="7" ref="5">
    <original>K</original>
    <variation>R</variation>
    <location>
        <position position="69"/>
    </location>
</feature>
<feature type="sequence conflict" description="In Ref. 3; AAH08559." evidence="7" ref="3">
    <original>ISAS</original>
    <variation>HASG</variation>
    <location>
        <begin position="71"/>
        <end position="74"/>
    </location>
</feature>
<feature type="sequence conflict" description="In Ref. 5; AAA40488." evidence="7" ref="5">
    <original>S</original>
    <variation>A</variation>
    <location>
        <position position="72"/>
    </location>
</feature>
<feature type="sequence conflict" description="In Ref. 5; AAA40488." evidence="7" ref="5">
    <original>W</original>
    <variation>L</variation>
    <location>
        <position position="85"/>
    </location>
</feature>
<feature type="sequence conflict" description="In Ref. 5; AAA40488." evidence="7" ref="5">
    <original>Y</original>
    <variation>C</variation>
    <location>
        <position position="104"/>
    </location>
</feature>
<feature type="sequence conflict" description="In Ref. 5; AAA40488." evidence="7" ref="5">
    <original>Y</original>
    <variation>S</variation>
    <location>
        <position position="113"/>
    </location>
</feature>
<feature type="sequence conflict" description="In Ref. 5; AAA40488." evidence="7" ref="5">
    <original>GT</original>
    <variation>ER</variation>
    <location>
        <begin position="123"/>
        <end position="124"/>
    </location>
</feature>
<feature type="sequence conflict" description="In Ref. 2; BAE29847." evidence="7" ref="2">
    <original>K</original>
    <variation>E</variation>
    <location>
        <position position="135"/>
    </location>
</feature>
<feature type="sequence conflict" description="In Ref. 6; AAB28966." evidence="7" ref="6">
    <original>W</original>
    <variation>L</variation>
    <location>
        <position position="283"/>
    </location>
</feature>
<feature type="sequence conflict" description="In Ref. 6; AAB28966." evidence="7" ref="6">
    <original>P</original>
    <variation>L</variation>
    <location>
        <position position="307"/>
    </location>
</feature>
<feature type="sequence conflict" description="In Ref. 7; AAA39438." evidence="7" ref="7">
    <original>CP</original>
    <variation>SA</variation>
    <location>
        <begin position="350"/>
        <end position="351"/>
    </location>
</feature>
<feature type="sequence conflict" description="In Ref. 5; AAA40490." evidence="7" ref="5">
    <original>G</original>
    <variation>C</variation>
    <location>
        <position position="487"/>
    </location>
</feature>
<feature type="sequence conflict" description="In Ref. 5; AAA40491." evidence="7" ref="5">
    <original>A</original>
    <variation>D</variation>
    <location>
        <position position="527"/>
    </location>
</feature>
<feature type="sequence conflict" description="In Ref. 2; BAE29847." evidence="7" ref="2">
    <original>N</original>
    <variation>S</variation>
    <location>
        <position position="529"/>
    </location>
</feature>
<feature type="sequence conflict" description="In Ref. 5; AAA40491." evidence="7" ref="5">
    <original>K</original>
    <variation>N</variation>
    <location>
        <position position="575"/>
    </location>
</feature>
<feature type="sequence conflict" description="In Ref. 1; AAL34533." evidence="7" ref="1">
    <original>H</original>
    <variation>S</variation>
    <location>
        <position position="697"/>
    </location>
</feature>
<comment type="function">
    <text>Transferrins are iron binding transport proteins which can bind two Fe(3+) ions in association with the binding of an anion, usually bicarbonate. It is responsible for the transport of iron from sites of absorption and heme degradation to those of storage and utilization. Serum transferrin may also have a further role in stimulating cell proliferation.</text>
</comment>
<comment type="subunit">
    <text evidence="2">Monomer. Part of a complex composed of SLC40A1/ferroportin, TF/transferrin and HEPH/hephaestin that transfers iron from cells to transferrin.</text>
</comment>
<comment type="subcellular location">
    <subcellularLocation>
        <location>Secreted</location>
    </subcellularLocation>
</comment>
<comment type="tissue specificity">
    <text evidence="6">Expressed by the liver and secreted in plasma.</text>
</comment>
<comment type="similarity">
    <text evidence="4">Belongs to the transferrin family.</text>
</comment>
<evidence type="ECO:0000250" key="1"/>
<evidence type="ECO:0000250" key="2">
    <source>
        <dbReference type="UniProtKB" id="P02787"/>
    </source>
</evidence>
<evidence type="ECO:0000250" key="3">
    <source>
        <dbReference type="UniProtKB" id="P12346"/>
    </source>
</evidence>
<evidence type="ECO:0000255" key="4">
    <source>
        <dbReference type="PROSITE-ProRule" id="PRU00741"/>
    </source>
</evidence>
<evidence type="ECO:0000269" key="5">
    <source>
    </source>
</evidence>
<evidence type="ECO:0000269" key="6">
    <source>
    </source>
</evidence>
<evidence type="ECO:0000305" key="7"/>
<protein>
    <recommendedName>
        <fullName>Serotransferrin</fullName>
        <shortName>Transferrin</shortName>
    </recommendedName>
    <alternativeName>
        <fullName>Beta-1 metal-binding globulin</fullName>
    </alternativeName>
    <alternativeName>
        <fullName>Siderophilin</fullName>
    </alternativeName>
</protein>
<name>TRFE_MOUSE</name>
<reference key="1">
    <citation type="submission" date="2001-10" db="EMBL/GenBank/DDBJ databases">
        <title>Construction of a robust CHO cell-line for biopharmaceutical production.</title>
        <authorList>
            <person name="Lai D.-Z."/>
        </authorList>
    </citation>
    <scope>NUCLEOTIDE SEQUENCE [MRNA]</scope>
    <source>
        <strain>BALB/cJ</strain>
        <tissue>Liver</tissue>
    </source>
</reference>
<reference key="2">
    <citation type="journal article" date="2005" name="Science">
        <title>The transcriptional landscape of the mammalian genome.</title>
        <authorList>
            <person name="Carninci P."/>
            <person name="Kasukawa T."/>
            <person name="Katayama S."/>
            <person name="Gough J."/>
            <person name="Frith M.C."/>
            <person name="Maeda N."/>
            <person name="Oyama R."/>
            <person name="Ravasi T."/>
            <person name="Lenhard B."/>
            <person name="Wells C."/>
            <person name="Kodzius R."/>
            <person name="Shimokawa K."/>
            <person name="Bajic V.B."/>
            <person name="Brenner S.E."/>
            <person name="Batalov S."/>
            <person name="Forrest A.R."/>
            <person name="Zavolan M."/>
            <person name="Davis M.J."/>
            <person name="Wilming L.G."/>
            <person name="Aidinis V."/>
            <person name="Allen J.E."/>
            <person name="Ambesi-Impiombato A."/>
            <person name="Apweiler R."/>
            <person name="Aturaliya R.N."/>
            <person name="Bailey T.L."/>
            <person name="Bansal M."/>
            <person name="Baxter L."/>
            <person name="Beisel K.W."/>
            <person name="Bersano T."/>
            <person name="Bono H."/>
            <person name="Chalk A.M."/>
            <person name="Chiu K.P."/>
            <person name="Choudhary V."/>
            <person name="Christoffels A."/>
            <person name="Clutterbuck D.R."/>
            <person name="Crowe M.L."/>
            <person name="Dalla E."/>
            <person name="Dalrymple B.P."/>
            <person name="de Bono B."/>
            <person name="Della Gatta G."/>
            <person name="di Bernardo D."/>
            <person name="Down T."/>
            <person name="Engstrom P."/>
            <person name="Fagiolini M."/>
            <person name="Faulkner G."/>
            <person name="Fletcher C.F."/>
            <person name="Fukushima T."/>
            <person name="Furuno M."/>
            <person name="Futaki S."/>
            <person name="Gariboldi M."/>
            <person name="Georgii-Hemming P."/>
            <person name="Gingeras T.R."/>
            <person name="Gojobori T."/>
            <person name="Green R.E."/>
            <person name="Gustincich S."/>
            <person name="Harbers M."/>
            <person name="Hayashi Y."/>
            <person name="Hensch T.K."/>
            <person name="Hirokawa N."/>
            <person name="Hill D."/>
            <person name="Huminiecki L."/>
            <person name="Iacono M."/>
            <person name="Ikeo K."/>
            <person name="Iwama A."/>
            <person name="Ishikawa T."/>
            <person name="Jakt M."/>
            <person name="Kanapin A."/>
            <person name="Katoh M."/>
            <person name="Kawasawa Y."/>
            <person name="Kelso J."/>
            <person name="Kitamura H."/>
            <person name="Kitano H."/>
            <person name="Kollias G."/>
            <person name="Krishnan S.P."/>
            <person name="Kruger A."/>
            <person name="Kummerfeld S.K."/>
            <person name="Kurochkin I.V."/>
            <person name="Lareau L.F."/>
            <person name="Lazarevic D."/>
            <person name="Lipovich L."/>
            <person name="Liu J."/>
            <person name="Liuni S."/>
            <person name="McWilliam S."/>
            <person name="Madan Babu M."/>
            <person name="Madera M."/>
            <person name="Marchionni L."/>
            <person name="Matsuda H."/>
            <person name="Matsuzawa S."/>
            <person name="Miki H."/>
            <person name="Mignone F."/>
            <person name="Miyake S."/>
            <person name="Morris K."/>
            <person name="Mottagui-Tabar S."/>
            <person name="Mulder N."/>
            <person name="Nakano N."/>
            <person name="Nakauchi H."/>
            <person name="Ng P."/>
            <person name="Nilsson R."/>
            <person name="Nishiguchi S."/>
            <person name="Nishikawa S."/>
            <person name="Nori F."/>
            <person name="Ohara O."/>
            <person name="Okazaki Y."/>
            <person name="Orlando V."/>
            <person name="Pang K.C."/>
            <person name="Pavan W.J."/>
            <person name="Pavesi G."/>
            <person name="Pesole G."/>
            <person name="Petrovsky N."/>
            <person name="Piazza S."/>
            <person name="Reed J."/>
            <person name="Reid J.F."/>
            <person name="Ring B.Z."/>
            <person name="Ringwald M."/>
            <person name="Rost B."/>
            <person name="Ruan Y."/>
            <person name="Salzberg S.L."/>
            <person name="Sandelin A."/>
            <person name="Schneider C."/>
            <person name="Schoenbach C."/>
            <person name="Sekiguchi K."/>
            <person name="Semple C.A."/>
            <person name="Seno S."/>
            <person name="Sessa L."/>
            <person name="Sheng Y."/>
            <person name="Shibata Y."/>
            <person name="Shimada H."/>
            <person name="Shimada K."/>
            <person name="Silva D."/>
            <person name="Sinclair B."/>
            <person name="Sperling S."/>
            <person name="Stupka E."/>
            <person name="Sugiura K."/>
            <person name="Sultana R."/>
            <person name="Takenaka Y."/>
            <person name="Taki K."/>
            <person name="Tammoja K."/>
            <person name="Tan S.L."/>
            <person name="Tang S."/>
            <person name="Taylor M.S."/>
            <person name="Tegner J."/>
            <person name="Teichmann S.A."/>
            <person name="Ueda H.R."/>
            <person name="van Nimwegen E."/>
            <person name="Verardo R."/>
            <person name="Wei C.L."/>
            <person name="Yagi K."/>
            <person name="Yamanishi H."/>
            <person name="Zabarovsky E."/>
            <person name="Zhu S."/>
            <person name="Zimmer A."/>
            <person name="Hide W."/>
            <person name="Bult C."/>
            <person name="Grimmond S.M."/>
            <person name="Teasdale R.D."/>
            <person name="Liu E.T."/>
            <person name="Brusic V."/>
            <person name="Quackenbush J."/>
            <person name="Wahlestedt C."/>
            <person name="Mattick J.S."/>
            <person name="Hume D.A."/>
            <person name="Kai C."/>
            <person name="Sasaki D."/>
            <person name="Tomaru Y."/>
            <person name="Fukuda S."/>
            <person name="Kanamori-Katayama M."/>
            <person name="Suzuki M."/>
            <person name="Aoki J."/>
            <person name="Arakawa T."/>
            <person name="Iida J."/>
            <person name="Imamura K."/>
            <person name="Itoh M."/>
            <person name="Kato T."/>
            <person name="Kawaji H."/>
            <person name="Kawagashira N."/>
            <person name="Kawashima T."/>
            <person name="Kojima M."/>
            <person name="Kondo S."/>
            <person name="Konno H."/>
            <person name="Nakano K."/>
            <person name="Ninomiya N."/>
            <person name="Nishio T."/>
            <person name="Okada M."/>
            <person name="Plessy C."/>
            <person name="Shibata K."/>
            <person name="Shiraki T."/>
            <person name="Suzuki S."/>
            <person name="Tagami M."/>
            <person name="Waki K."/>
            <person name="Watahiki A."/>
            <person name="Okamura-Oho Y."/>
            <person name="Suzuki H."/>
            <person name="Kawai J."/>
            <person name="Hayashizaki Y."/>
        </authorList>
    </citation>
    <scope>NUCLEOTIDE SEQUENCE [LARGE SCALE MRNA]</scope>
    <source>
        <strain>C57BL/6J</strain>
        <tissue>Amnion</tissue>
        <tissue>Bone marrow</tissue>
        <tissue>Liver</tissue>
        <tissue>Mammary gland</tissue>
    </source>
</reference>
<reference key="3">
    <citation type="journal article" date="2004" name="Genome Res.">
        <title>The status, quality, and expansion of the NIH full-length cDNA project: the Mammalian Gene Collection (MGC).</title>
        <authorList>
            <consortium name="The MGC Project Team"/>
        </authorList>
    </citation>
    <scope>NUCLEOTIDE SEQUENCE [LARGE SCALE MRNA]</scope>
    <source>
        <strain>FVB/N</strain>
        <tissue>Liver</tissue>
        <tissue>Mammary tumor</tissue>
    </source>
</reference>
<reference key="4">
    <citation type="journal article" date="1998" name="Mol. Reprod. Dev.">
        <title>Comparative sequence analysis of the mouse and human transferrin promoters: hormonal regulation of the transferrin promoter in Sertoli cells.</title>
        <authorList>
            <person name="Chaudhary J."/>
            <person name="Skinner M.K."/>
        </authorList>
    </citation>
    <scope>NUCLEOTIDE SEQUENCE [GENOMIC DNA] OF 1-11</scope>
    <source>
        <strain>BALB/cJ</strain>
    </source>
</reference>
<reference key="5">
    <citation type="journal article" date="1987" name="J. Biol. Chem.">
        <title>Transferrin mRNA level in the mouse mammary gland is regulated by pregnancy and extracellular matrix.</title>
        <authorList>
            <person name="Chen L.-H."/>
            <person name="Bissell M.J."/>
        </authorList>
    </citation>
    <scope>NUCLEOTIDE SEQUENCE [MRNA] OF 66-131; 277-337; 462-496 AND 526-575</scope>
</reference>
<reference key="6">
    <citation type="journal article" date="1993" name="Placenta">
        <title>Transferrin gene expression in maternal liver, fetal liver and placenta during pregnancy in the mouse.</title>
        <authorList>
            <person name="Kasik J.W."/>
            <person name="Rice E.J."/>
        </authorList>
    </citation>
    <scope>NUCLEOTIDE SEQUENCE [MRNA] OF 268-307</scope>
    <source>
        <tissue>Placenta</tissue>
    </source>
</reference>
<reference key="7">
    <citation type="journal article" date="1987" name="J. Biol. Chem.">
        <title>Lactotransferrin is the major estrogen inducible protein of mouse uterine secretions.</title>
        <authorList>
            <person name="Pentecost B.T."/>
            <person name="Teng C.T."/>
        </authorList>
    </citation>
    <scope>NUCLEOTIDE SEQUENCE [MRNA] OF 282-412</scope>
</reference>
<reference key="8">
    <citation type="submission" date="2007-04" db="UniProtKB">
        <authorList>
            <person name="Lubec G."/>
            <person name="Klug S."/>
            <person name="Kang S.U."/>
        </authorList>
    </citation>
    <scope>PROTEIN SEQUENCE OF 332-343 AND 659-667</scope>
    <scope>IDENTIFICATION BY MASS SPECTROMETRY</scope>
    <source>
        <strain>C57BL/6J</strain>
        <tissue>Brain</tissue>
        <tissue>Hippocampus</tissue>
    </source>
</reference>
<reference key="9">
    <citation type="journal article" date="1989" name="Mol. Cell. Biol.">
        <title>Expression from the transferrin gene promoter in transgenic mice.</title>
        <authorList>
            <person name="Idzerda R.L."/>
            <person name="Behringer R.R."/>
            <person name="Theisen M."/>
            <person name="Huggenvik J.I."/>
            <person name="McKnight G.S."/>
            <person name="Brinster R.L."/>
        </authorList>
    </citation>
    <scope>TISSUE SPECIFICITY</scope>
</reference>
<reference key="10">
    <citation type="journal article" date="2007" name="J. Proteome Res.">
        <title>Enhanced analysis of the mouse plasma proteome using cysteine-containing tryptic glycopeptides.</title>
        <authorList>
            <person name="Bernhard O.K."/>
            <person name="Kapp E.A."/>
            <person name="Simpson R.J."/>
        </authorList>
    </citation>
    <scope>GLYCOSYLATION [LARGE SCALE ANALYSIS] AT ASN-513</scope>
    <source>
        <strain>C57BL/6J</strain>
        <tissue>Plasma</tissue>
    </source>
</reference>
<reference key="11">
    <citation type="journal article" date="2010" name="Cell">
        <title>A tissue-specific atlas of mouse protein phosphorylation and expression.</title>
        <authorList>
            <person name="Huttlin E.L."/>
            <person name="Jedrychowski M.P."/>
            <person name="Elias J.E."/>
            <person name="Goswami T."/>
            <person name="Rad R."/>
            <person name="Beausoleil S.A."/>
            <person name="Villen J."/>
            <person name="Haas W."/>
            <person name="Sowa M.E."/>
            <person name="Gygi S.P."/>
        </authorList>
    </citation>
    <scope>IDENTIFICATION BY MASS SPECTROMETRY [LARGE SCALE ANALYSIS]</scope>
    <source>
        <tissue>Brain</tissue>
        <tissue>Brown adipose tissue</tissue>
        <tissue>Heart</tissue>
        <tissue>Kidney</tissue>
        <tissue>Liver</tissue>
        <tissue>Lung</tissue>
        <tissue>Pancreas</tissue>
        <tissue>Spleen</tissue>
        <tissue>Testis</tissue>
    </source>
</reference>
<proteinExistence type="evidence at protein level"/>